<keyword id="KW-0997">Cell inner membrane</keyword>
<keyword id="KW-1003">Cell membrane</keyword>
<keyword id="KW-0903">Direct protein sequencing</keyword>
<keyword id="KW-0285">Flavoprotein</keyword>
<keyword id="KW-0288">FMN</keyword>
<keyword id="KW-0472">Membrane</keyword>
<keyword id="KW-0547">Nucleotide-binding</keyword>
<keyword id="KW-0560">Oxidoreductase</keyword>
<keyword id="KW-0627">Porphyrin biosynthesis</keyword>
<keyword id="KW-1185">Reference proteome</keyword>
<protein>
    <recommendedName>
        <fullName evidence="1">Protoporphyrinogen IX dehydrogenase [quinone]</fullName>
        <ecNumber evidence="1 2 3">1.3.5.3</ecNumber>
    </recommendedName>
    <alternativeName>
        <fullName evidence="1">Protoporphyrinogen IX dehydrogenase [menaquinone]</fullName>
    </alternativeName>
    <alternativeName>
        <fullName evidence="1">Protoporphyrinogen IX dehydrogenase [ubiquinone]</fullName>
    </alternativeName>
    <alternativeName>
        <fullName evidence="1 8">Protoporphyrinogen oxidase</fullName>
        <shortName evidence="1 8">PPO</shortName>
    </alternativeName>
</protein>
<organism>
    <name type="scientific">Escherichia coli (strain K12)</name>
    <dbReference type="NCBI Taxonomy" id="83333"/>
    <lineage>
        <taxon>Bacteria</taxon>
        <taxon>Pseudomonadati</taxon>
        <taxon>Pseudomonadota</taxon>
        <taxon>Gammaproteobacteria</taxon>
        <taxon>Enterobacterales</taxon>
        <taxon>Enterobacteriaceae</taxon>
        <taxon>Escherichia</taxon>
    </lineage>
</organism>
<dbReference type="EC" id="1.3.5.3" evidence="1 2 3"/>
<dbReference type="EMBL" id="X54687">
    <property type="status" value="NOT_ANNOTATED_CDS"/>
    <property type="molecule type" value="Genomic_DNA"/>
</dbReference>
<dbReference type="EMBL" id="X68660">
    <property type="protein sequence ID" value="CAA48626.1"/>
    <property type="molecule type" value="Genomic_DNA"/>
</dbReference>
<dbReference type="EMBL" id="M87049">
    <property type="protein sequence ID" value="AAA67647.1"/>
    <property type="molecule type" value="Genomic_DNA"/>
</dbReference>
<dbReference type="EMBL" id="U00096">
    <property type="protein sequence ID" value="AAC76853.1"/>
    <property type="molecule type" value="Genomic_DNA"/>
</dbReference>
<dbReference type="EMBL" id="AP009048">
    <property type="protein sequence ID" value="BAE77453.1"/>
    <property type="molecule type" value="Genomic_DNA"/>
</dbReference>
<dbReference type="PIR" id="JC2513">
    <property type="entry name" value="JC2513"/>
</dbReference>
<dbReference type="RefSeq" id="NP_418292.1">
    <property type="nucleotide sequence ID" value="NC_000913.3"/>
</dbReference>
<dbReference type="RefSeq" id="WP_000853959.1">
    <property type="nucleotide sequence ID" value="NZ_STEB01000021.1"/>
</dbReference>
<dbReference type="SMR" id="P0ACB4"/>
<dbReference type="BioGRID" id="4262620">
    <property type="interactions" value="22"/>
</dbReference>
<dbReference type="DIP" id="DIP-35890N"/>
<dbReference type="FunCoup" id="P0ACB4">
    <property type="interactions" value="213"/>
</dbReference>
<dbReference type="IntAct" id="P0ACB4">
    <property type="interactions" value="19"/>
</dbReference>
<dbReference type="STRING" id="511145.b3850"/>
<dbReference type="jPOST" id="P0ACB4"/>
<dbReference type="PaxDb" id="511145-b3850"/>
<dbReference type="EnsemblBacteria" id="AAC76853">
    <property type="protein sequence ID" value="AAC76853"/>
    <property type="gene ID" value="b3850"/>
</dbReference>
<dbReference type="GeneID" id="75174084"/>
<dbReference type="GeneID" id="948331"/>
<dbReference type="KEGG" id="ecj:JW3827"/>
<dbReference type="KEGG" id="eco:b3850"/>
<dbReference type="KEGG" id="ecoc:C3026_20815"/>
<dbReference type="PATRIC" id="fig|1411691.4.peg.2860"/>
<dbReference type="EchoBASE" id="EB1448"/>
<dbReference type="eggNOG" id="COG4635">
    <property type="taxonomic scope" value="Bacteria"/>
</dbReference>
<dbReference type="HOGENOM" id="CLU_094839_0_1_6"/>
<dbReference type="InParanoid" id="P0ACB4"/>
<dbReference type="OMA" id="NPYMKKF"/>
<dbReference type="OrthoDB" id="9795729at2"/>
<dbReference type="PhylomeDB" id="P0ACB4"/>
<dbReference type="BioCyc" id="EcoCyc:PROTOPORGENOXI-MONOMER"/>
<dbReference type="BioCyc" id="MetaCyc:PROTOPORGENOXI-MONOMER"/>
<dbReference type="SABIO-RK" id="P0ACB4"/>
<dbReference type="UniPathway" id="UPA00251">
    <property type="reaction ID" value="UER00324"/>
</dbReference>
<dbReference type="PRO" id="PR:P0ACB4"/>
<dbReference type="Proteomes" id="UP000000625">
    <property type="component" value="Chromosome"/>
</dbReference>
<dbReference type="GO" id="GO:0016020">
    <property type="term" value="C:membrane"/>
    <property type="evidence" value="ECO:0000314"/>
    <property type="project" value="EcoCyc"/>
</dbReference>
<dbReference type="GO" id="GO:0005886">
    <property type="term" value="C:plasma membrane"/>
    <property type="evidence" value="ECO:0007669"/>
    <property type="project" value="UniProtKB-SubCell"/>
</dbReference>
<dbReference type="GO" id="GO:0009055">
    <property type="term" value="F:electron transfer activity"/>
    <property type="evidence" value="ECO:0007669"/>
    <property type="project" value="InterPro"/>
</dbReference>
<dbReference type="GO" id="GO:0010181">
    <property type="term" value="F:FMN binding"/>
    <property type="evidence" value="ECO:0000314"/>
    <property type="project" value="EcoCyc"/>
</dbReference>
<dbReference type="GO" id="GO:0070819">
    <property type="term" value="F:menaquinone-dependent protoporphyrinogen oxidase activity"/>
    <property type="evidence" value="ECO:0000314"/>
    <property type="project" value="EcoCyc"/>
</dbReference>
<dbReference type="GO" id="GO:0004729">
    <property type="term" value="F:oxygen-dependent protoporphyrinogen oxidase activity"/>
    <property type="evidence" value="ECO:0007669"/>
    <property type="project" value="InterPro"/>
</dbReference>
<dbReference type="GO" id="GO:0006785">
    <property type="term" value="P:heme B biosynthetic process"/>
    <property type="evidence" value="ECO:0000315"/>
    <property type="project" value="EcoCyc"/>
</dbReference>
<dbReference type="GO" id="GO:0006783">
    <property type="term" value="P:heme biosynthetic process"/>
    <property type="evidence" value="ECO:0000315"/>
    <property type="project" value="EcoCyc"/>
</dbReference>
<dbReference type="GO" id="GO:0006779">
    <property type="term" value="P:porphyrin-containing compound biosynthetic process"/>
    <property type="evidence" value="ECO:0000315"/>
    <property type="project" value="EcoliWiki"/>
</dbReference>
<dbReference type="GO" id="GO:0006782">
    <property type="term" value="P:protoporphyrinogen IX biosynthetic process"/>
    <property type="evidence" value="ECO:0007669"/>
    <property type="project" value="UniProtKB-UniRule"/>
</dbReference>
<dbReference type="FunFam" id="3.40.50.360:FF:000017">
    <property type="entry name" value="Protoporphyrinogen oxidase (PPO)"/>
    <property type="match status" value="1"/>
</dbReference>
<dbReference type="Gene3D" id="3.40.50.360">
    <property type="match status" value="1"/>
</dbReference>
<dbReference type="HAMAP" id="MF_00853">
    <property type="entry name" value="HemG"/>
    <property type="match status" value="1"/>
</dbReference>
<dbReference type="InterPro" id="IPR008254">
    <property type="entry name" value="Flavodoxin/NO_synth"/>
</dbReference>
<dbReference type="InterPro" id="IPR001226">
    <property type="entry name" value="Flavodoxin_CS"/>
</dbReference>
<dbReference type="InterPro" id="IPR026816">
    <property type="entry name" value="Flavodoxin_dom"/>
</dbReference>
<dbReference type="InterPro" id="IPR029039">
    <property type="entry name" value="Flavoprotein-like_sf"/>
</dbReference>
<dbReference type="InterPro" id="IPR044264">
    <property type="entry name" value="HemG"/>
</dbReference>
<dbReference type="InterPro" id="IPR052200">
    <property type="entry name" value="Protoporphyrinogen_IX_DH"/>
</dbReference>
<dbReference type="NCBIfam" id="NF008316">
    <property type="entry name" value="PRK11104.1"/>
    <property type="match status" value="1"/>
</dbReference>
<dbReference type="PANTHER" id="PTHR38030">
    <property type="entry name" value="PROTOPORPHYRINOGEN IX DEHYDROGENASE [MENAQUINONE]"/>
    <property type="match status" value="1"/>
</dbReference>
<dbReference type="PANTHER" id="PTHR38030:SF2">
    <property type="entry name" value="PROTOPORPHYRINOGEN IX DEHYDROGENASE [QUINONE]"/>
    <property type="match status" value="1"/>
</dbReference>
<dbReference type="Pfam" id="PF12724">
    <property type="entry name" value="Flavodoxin_5"/>
    <property type="match status" value="1"/>
</dbReference>
<dbReference type="SUPFAM" id="SSF52218">
    <property type="entry name" value="Flavoproteins"/>
    <property type="match status" value="1"/>
</dbReference>
<dbReference type="PROSITE" id="PS00201">
    <property type="entry name" value="FLAVODOXIN"/>
    <property type="match status" value="1"/>
</dbReference>
<dbReference type="PROSITE" id="PS50902">
    <property type="entry name" value="FLAVODOXIN_LIKE"/>
    <property type="match status" value="1"/>
</dbReference>
<name>HEMG_ECOLI</name>
<reference key="1">
    <citation type="journal article" date="1990" name="Nucleic Acids Res.">
        <title>Nucleotide sequence between the fadB gene and the rrnA operon from Escherichia coli.</title>
        <authorList>
            <person name="Nakahigashi K."/>
            <person name="Inokuchi H."/>
        </authorList>
    </citation>
    <scope>NUCLEOTIDE SEQUENCE [GENOMIC DNA]</scope>
    <source>
        <strain>K12</strain>
    </source>
</reference>
<reference key="2">
    <citation type="journal article" date="1993" name="Can. J. Microbiol.">
        <title>Nucleotide sequence of the hemG gene involved in the protoporphyrinogen oxidase activity of Escherichia coli K12.</title>
        <authorList>
            <person name="Sasarman A."/>
            <person name="Letowski J."/>
            <person name="Czaika G."/>
            <person name="Ramirez V."/>
            <person name="Nead M.A."/>
            <person name="Jacobs J.M."/>
            <person name="Morais R."/>
        </authorList>
    </citation>
    <scope>NUCLEOTIDE SEQUENCE [GENOMIC DNA]</scope>
    <scope>PROTEIN SEQUENCE OF 1-18</scope>
    <scope>CHARACTERIZATION</scope>
    <scope>PATHWAY</scope>
    <scope>DISRUPTION PHENOTYPE</scope>
    <source>
        <strain>K12 / SASX38</strain>
    </source>
</reference>
<reference key="3">
    <citation type="journal article" date="1995" name="DNA Res.">
        <title>Cloning and identification of the hemG gene encoding protoporphyrinogen oxidase (PPO) of Escherichia coli K-12.</title>
        <authorList>
            <person name="Nishimura K."/>
            <person name="Nakahigashi K."/>
            <person name="Inokuchi H."/>
        </authorList>
    </citation>
    <scope>NUCLEOTIDE SEQUENCE [GENOMIC DNA]</scope>
    <scope>DISRUPTION PHENOTYPE</scope>
    <source>
        <strain>K12</strain>
    </source>
</reference>
<reference key="4">
    <citation type="journal article" date="1992" name="Science">
        <title>Analysis of the Escherichia coli genome: DNA sequence of the region from 84.5 to 86.5 minutes.</title>
        <authorList>
            <person name="Daniels D.L."/>
            <person name="Plunkett G. III"/>
            <person name="Burland V.D."/>
            <person name="Blattner F.R."/>
        </authorList>
    </citation>
    <scope>NUCLEOTIDE SEQUENCE [LARGE SCALE GENOMIC DNA]</scope>
    <source>
        <strain>K12 / MG1655 / ATCC 47076</strain>
    </source>
</reference>
<reference key="5">
    <citation type="journal article" date="1997" name="Science">
        <title>The complete genome sequence of Escherichia coli K-12.</title>
        <authorList>
            <person name="Blattner F.R."/>
            <person name="Plunkett G. III"/>
            <person name="Bloch C.A."/>
            <person name="Perna N.T."/>
            <person name="Burland V."/>
            <person name="Riley M."/>
            <person name="Collado-Vides J."/>
            <person name="Glasner J.D."/>
            <person name="Rode C.K."/>
            <person name="Mayhew G.F."/>
            <person name="Gregor J."/>
            <person name="Davis N.W."/>
            <person name="Kirkpatrick H.A."/>
            <person name="Goeden M.A."/>
            <person name="Rose D.J."/>
            <person name="Mau B."/>
            <person name="Shao Y."/>
        </authorList>
    </citation>
    <scope>NUCLEOTIDE SEQUENCE [LARGE SCALE GENOMIC DNA]</scope>
    <source>
        <strain>K12 / MG1655 / ATCC 47076</strain>
    </source>
</reference>
<reference key="6">
    <citation type="journal article" date="2006" name="Mol. Syst. Biol.">
        <title>Highly accurate genome sequences of Escherichia coli K-12 strains MG1655 and W3110.</title>
        <authorList>
            <person name="Hayashi K."/>
            <person name="Morooka N."/>
            <person name="Yamamoto Y."/>
            <person name="Fujita K."/>
            <person name="Isono K."/>
            <person name="Choi S."/>
            <person name="Ohtsubo E."/>
            <person name="Baba T."/>
            <person name="Wanner B.L."/>
            <person name="Mori H."/>
            <person name="Horiuchi T."/>
        </authorList>
    </citation>
    <scope>NUCLEOTIDE SEQUENCE [LARGE SCALE GENOMIC DNA]</scope>
    <source>
        <strain>K12 / W3110 / ATCC 27325 / DSM 5911</strain>
    </source>
</reference>
<reference key="7">
    <citation type="journal article" date="1979" name="J. Gen. Microbiol.">
        <title>Mapping of a new hem gene in Escherichia coli K12.</title>
        <authorList>
            <person name="Sasarman A."/>
            <person name="Chartrand P."/>
            <person name="Lavoie M."/>
            <person name="Tardif D."/>
            <person name="Proschek R."/>
            <person name="Lapointe C."/>
        </authorList>
    </citation>
    <scope>IDENTIFICATION</scope>
    <scope>DISRUPTION PHENOTYPE</scope>
    <source>
        <strain>K12 / SASX38</strain>
    </source>
</reference>
<reference key="8">
    <citation type="journal article" date="2009" name="Biochemistry">
        <title>Identification of Escherichia coli HemG as a novel, menadione-dependent flavodoxin with protoporphyrinogen oxidase activity.</title>
        <authorList>
            <person name="Boynton T.O."/>
            <person name="Daugherty L.E."/>
            <person name="Dailey T.A."/>
            <person name="Dailey H.A."/>
        </authorList>
    </citation>
    <scope>FUNCTION</scope>
    <scope>CATALYTIC ACTIVITY</scope>
    <scope>SUBSTRATE SPECIFICITY</scope>
    <scope>POSSIBLE COFACTOR</scope>
    <scope>BIOPHYSICOCHEMICAL PROPERTIES</scope>
    <scope>SUBUNIT</scope>
    <scope>DISRUPTION PHENOTYPE</scope>
    <source>
        <strain>K12 / SASX38</strain>
    </source>
</reference>
<reference key="9">
    <citation type="journal article" date="2010" name="Proc. Natl. Acad. Sci. U.S.A.">
        <title>Heme biosynthesis is coupled to electron transport chains for energy generation.</title>
        <authorList>
            <person name="Moebius K."/>
            <person name="Arias-Cartin R."/>
            <person name="Breckau D."/>
            <person name="Haennig A.L."/>
            <person name="Riedmann K."/>
            <person name="Biedendieck R."/>
            <person name="Schroeder S."/>
            <person name="Becher D."/>
            <person name="Magalon A."/>
            <person name="Moser J."/>
            <person name="Jahn M."/>
            <person name="Jahn D."/>
        </authorList>
    </citation>
    <scope>FUNCTION</scope>
    <scope>CATALYTIC ACTIVITY</scope>
    <scope>COFACTOR</scope>
    <scope>ACTIVITY REGULATION</scope>
    <scope>BIOPHYSICOCHEMICAL PROPERTIES</scope>
    <scope>SUBUNIT</scope>
    <scope>SUBCELLULAR LOCATION</scope>
</reference>
<accession>P0ACB4</accession>
<accession>P27863</accession>
<accession>Q2M8F3</accession>
<evidence type="ECO:0000255" key="1">
    <source>
        <dbReference type="HAMAP-Rule" id="MF_00853"/>
    </source>
</evidence>
<evidence type="ECO:0000269" key="2">
    <source>
    </source>
</evidence>
<evidence type="ECO:0000269" key="3">
    <source>
    </source>
</evidence>
<evidence type="ECO:0000269" key="4">
    <source>
    </source>
</evidence>
<evidence type="ECO:0000269" key="5">
    <source>
    </source>
</evidence>
<evidence type="ECO:0000269" key="6">
    <source>
    </source>
</evidence>
<evidence type="ECO:0000303" key="7">
    <source>
    </source>
</evidence>
<evidence type="ECO:0000303" key="8">
    <source>
    </source>
</evidence>
<evidence type="ECO:0000305" key="9"/>
<evidence type="ECO:0000305" key="10">
    <source>
    </source>
</evidence>
<evidence type="ECO:0000305" key="11">
    <source>
    </source>
</evidence>
<evidence type="ECO:0000305" key="12">
    <source>
    </source>
</evidence>
<feature type="chain" id="PRO_0000135259" description="Protoporphyrinogen IX dehydrogenase [quinone]">
    <location>
        <begin position="1"/>
        <end position="181"/>
    </location>
</feature>
<feature type="domain" description="Flavodoxin-like" evidence="1">
    <location>
        <begin position="3"/>
        <end position="172"/>
    </location>
</feature>
<feature type="binding site" evidence="1">
    <location>
        <begin position="9"/>
        <end position="13"/>
    </location>
    <ligand>
        <name>FMN</name>
        <dbReference type="ChEBI" id="CHEBI:58210"/>
    </ligand>
</feature>
<feature type="binding site" evidence="1">
    <location>
        <begin position="84"/>
        <end position="152"/>
    </location>
    <ligand>
        <name>FMN</name>
        <dbReference type="ChEBI" id="CHEBI:58210"/>
    </ligand>
</feature>
<comment type="function">
    <text evidence="1">Catalyzes the 6-electron oxidation of protoporphyrinogen IX to form protoporphyrin IX; under anaerobic conditions uses menaquinone as an electron acceptor, under aerobic condition uses ubiquinone as an electron acceptor.</text>
</comment>
<comment type="function">
    <text evidence="2 3">Anaerobically in vitro transfers electrons to fumarate reductase and nitrate reductase; transfer to nitrate reductase couples this reaction to electron transfer across the cell inner membrane and thus ATP synthesis (PubMed:19583219, PubMed:20484676). Neither mesoporphyrinogen nor coproporphyrinogen are substrates (PubMed:19583219). Under aerobic conditions in vitro forms protoporphyrin IX using ubiquinone as an electron acceptor, is able to transfer electrons to cytochrome bd oxidase and cytochrome bo oxidase; transfer to these oxidases couples this reaction to electron transfer across the cell inner membrane and thus ATP synthesis. In cell free extracts deletion of both cytochrome oxidases prevents formation of protoporphyrin IX (PubMed:20484676).</text>
</comment>
<comment type="catalytic activity">
    <reaction evidence="1 2 3">
        <text>protoporphyrinogen IX + 3 a menaquinone = protoporphyrin IX + 3 a menaquinol</text>
        <dbReference type="Rhea" id="RHEA:27409"/>
        <dbReference type="Rhea" id="RHEA-COMP:9537"/>
        <dbReference type="Rhea" id="RHEA-COMP:9539"/>
        <dbReference type="ChEBI" id="CHEBI:16374"/>
        <dbReference type="ChEBI" id="CHEBI:18151"/>
        <dbReference type="ChEBI" id="CHEBI:57306"/>
        <dbReference type="ChEBI" id="CHEBI:57307"/>
        <dbReference type="EC" id="1.3.5.3"/>
    </reaction>
</comment>
<comment type="catalytic activity">
    <reaction evidence="1 3">
        <text>protoporphyrinogen IX + 3 a ubiquinone = protoporphyrin IX + 3 a ubiquinol</text>
        <dbReference type="Rhea" id="RHEA:63936"/>
        <dbReference type="Rhea" id="RHEA-COMP:9565"/>
        <dbReference type="Rhea" id="RHEA-COMP:9566"/>
        <dbReference type="ChEBI" id="CHEBI:16389"/>
        <dbReference type="ChEBI" id="CHEBI:17976"/>
        <dbReference type="ChEBI" id="CHEBI:57306"/>
        <dbReference type="ChEBI" id="CHEBI:57307"/>
    </reaction>
</comment>
<comment type="catalytic activity">
    <reaction evidence="1 3">
        <text>protoporphyrinogen IX + 3 a quinone = protoporphyrin IX + 3 a quinol</text>
        <dbReference type="Rhea" id="RHEA:65032"/>
        <dbReference type="ChEBI" id="CHEBI:24646"/>
        <dbReference type="ChEBI" id="CHEBI:57306"/>
        <dbReference type="ChEBI" id="CHEBI:57307"/>
        <dbReference type="ChEBI" id="CHEBI:132124"/>
        <dbReference type="EC" id="1.3.5.3"/>
    </reaction>
</comment>
<comment type="cofactor">
    <cofactor evidence="1 3 10">
        <name>FMN</name>
        <dbReference type="ChEBI" id="CHEBI:58210"/>
    </cofactor>
    <text evidence="1 3">Binds 1 FMN non-covalently per subunit.</text>
</comment>
<comment type="activity regulation">
    <text evidence="3">Anaerobic activity is inhibited by pentachlorophenol.</text>
</comment>
<comment type="biophysicochemical properties">
    <kinetics>
        <KM evidence="2">7 uM for protoporphyrinogen IX</KM>
        <KM evidence="2">3.76 uM for menadione (a soluble menaquinone analog)</KM>
        <KM evidence="3">17.3 uM for menaquinone</KM>
        <Vmax evidence="3">960.0 umol/h/mg enzyme</Vmax>
        <text evidence="2">kcat for protoporphyrinogen IX is 17.52 min(-1) and for menadione is 16.86 min(-1).</text>
    </kinetics>
    <redoxPotential>
        <text evidence="2">E(0) are -241 mV and -412 for the first and second reduction steps of HemG respectively.</text>
    </redoxPotential>
</comment>
<comment type="pathway">
    <text evidence="1 10 12">Porphyrin-containing compound metabolism; protoporphyrin-IX biosynthesis; protoporphyrin-IX from protoporphyrinogen-IX: step 1/1.</text>
</comment>
<comment type="subunit">
    <text evidence="3 10">Homotetramer (Probable). Homohexamer. Purified from membrane fractions associated with fumarate reductase (subunit FrdA) (PubMed:20484676).</text>
</comment>
<comment type="interaction">
    <interactant intactId="EBI-1115706">
        <id>P0ACB4</id>
    </interactant>
    <interactant intactId="EBI-550480">
        <id>P00363</id>
        <label>frdA</label>
    </interactant>
    <organismsDiffer>false</organismsDiffer>
    <experiments>2</experiments>
</comment>
<comment type="subcellular location">
    <subcellularLocation>
        <location evidence="1 11">Cell inner membrane</location>
        <topology evidence="1 11">Peripheral membrane protein</topology>
    </subcellularLocation>
</comment>
<comment type="disruption phenotype">
    <text evidence="2 4 5 6">Loss of protoporphyrinogen IX dehydrogenase activity, grows very slowly unless supplemented with heme (PubMed:19583219, PubMed:390093, PubMed:7916647). Accumulates intermediates of heme synthesis such as uroporphyrinogen III, coproprophyrin III and protoporphyrinogen IX (PubMed:390093, PubMed:7788523).</text>
</comment>
<comment type="similarity">
    <text evidence="1">Belongs to the HemG family.</text>
</comment>
<comment type="sequence caution" evidence="9">
    <conflict type="frameshift">
        <sequence resource="EMBL" id="X54687"/>
    </conflict>
</comment>
<gene>
    <name evidence="1 7" type="primary">hemG</name>
    <name type="synonym">yihB</name>
    <name type="ordered locus">b3850</name>
    <name type="ordered locus">JW3827</name>
</gene>
<proteinExistence type="evidence at protein level"/>
<sequence length="181" mass="21226">MKTLILFSTRDGQTREIASYLASELKELGIQADVANVHRIEEPQWENYDRVVIGASIRYGHYHSAFQEFVKKHATRLNSMPSAFYSVNLVARKPEKRTPQTNSYARKFLMNSQWRPDRCAVIAGALRYPRYRWYDRFMIKLIMKMSGGETDTRKEVVYTDWEQVANFAREIAHLTDKPTLK</sequence>